<comment type="cofactor">
    <cofactor evidence="1">
        <name>Fe cation</name>
        <dbReference type="ChEBI" id="CHEBI:24875"/>
    </cofactor>
    <text evidence="1">Binds 1 Fe cation per subunit.</text>
</comment>
<comment type="cofactor">
    <cofactor evidence="1">
        <name>Zn(2+)</name>
        <dbReference type="ChEBI" id="CHEBI:29105"/>
    </cofactor>
    <text evidence="1">Binds 1 zinc ion per subunit.</text>
</comment>
<comment type="subunit">
    <text evidence="1">Homodimer.</text>
</comment>
<comment type="subcellular location">
    <subcellularLocation>
        <location evidence="1">Secreted</location>
    </subcellularLocation>
</comment>
<comment type="tissue specificity">
    <text evidence="3">Expressed in roots, stems, leaves, flowers and siliques.</text>
</comment>
<comment type="similarity">
    <text evidence="4">Belongs to the metallophosphoesterase superfamily. Purple acid phosphatase family.</text>
</comment>
<comment type="caution">
    <text evidence="4">Lacks the conserved His residue essential for phosphatase activity. Its enzyme activity is therefore unsure.</text>
</comment>
<comment type="sequence caution" evidence="4">
    <conflict type="erroneous gene model prediction">
        <sequence resource="EMBL-CDS" id="BAB09459"/>
    </conflict>
</comment>
<organism>
    <name type="scientific">Arabidopsis thaliana</name>
    <name type="common">Mouse-ear cress</name>
    <dbReference type="NCBI Taxonomy" id="3702"/>
    <lineage>
        <taxon>Eukaryota</taxon>
        <taxon>Viridiplantae</taxon>
        <taxon>Streptophyta</taxon>
        <taxon>Embryophyta</taxon>
        <taxon>Tracheophyta</taxon>
        <taxon>Spermatophyta</taxon>
        <taxon>Magnoliopsida</taxon>
        <taxon>eudicotyledons</taxon>
        <taxon>Gunneridae</taxon>
        <taxon>Pentapetalae</taxon>
        <taxon>rosids</taxon>
        <taxon>malvids</taxon>
        <taxon>Brassicales</taxon>
        <taxon>Brassicaceae</taxon>
        <taxon>Camelineae</taxon>
        <taxon>Arabidopsis</taxon>
    </lineage>
</organism>
<protein>
    <recommendedName>
        <fullName>Probable inactive purple acid phosphatase 27</fullName>
    </recommendedName>
</protein>
<gene>
    <name type="primary">PAP27</name>
    <name type="ordered locus">At5g50400</name>
    <name type="ORF">MXI22.12</name>
</gene>
<proteinExistence type="evidence at transcript level"/>
<evidence type="ECO:0000250" key="1"/>
<evidence type="ECO:0000255" key="2"/>
<evidence type="ECO:0000269" key="3">
    <source>
    </source>
</evidence>
<evidence type="ECO:0000305" key="4"/>
<reference key="1">
    <citation type="journal article" date="2005" name="Plant Mol. Biol.">
        <title>Expression patterns of purple acid phosphatase genes in Arabidopsis organs and functional analysis of AtPAP23 predominantly transcribed in flower.</title>
        <authorList>
            <person name="Zhu H."/>
            <person name="Qian W."/>
            <person name="Lu X."/>
            <person name="Li D."/>
            <person name="Liu X."/>
            <person name="Liu K."/>
            <person name="Wang D."/>
        </authorList>
    </citation>
    <scope>NUCLEOTIDE SEQUENCE [MRNA]</scope>
    <scope>TISSUE SPECIFICITY</scope>
    <source>
        <strain>cv. Columbia</strain>
    </source>
</reference>
<reference key="2">
    <citation type="journal article" date="1998" name="DNA Res.">
        <title>Structural analysis of Arabidopsis thaliana chromosome 5. VI. Sequence features of the regions of 1,367,185 bp covered by 19 physically assigned P1 and TAC clones.</title>
        <authorList>
            <person name="Kotani H."/>
            <person name="Nakamura Y."/>
            <person name="Sato S."/>
            <person name="Asamizu E."/>
            <person name="Kaneko T."/>
            <person name="Miyajima N."/>
            <person name="Tabata S."/>
        </authorList>
    </citation>
    <scope>NUCLEOTIDE SEQUENCE [LARGE SCALE GENOMIC DNA]</scope>
    <source>
        <strain>cv. Columbia</strain>
    </source>
</reference>
<reference key="3">
    <citation type="journal article" date="2017" name="Plant J.">
        <title>Araport11: a complete reannotation of the Arabidopsis thaliana reference genome.</title>
        <authorList>
            <person name="Cheng C.Y."/>
            <person name="Krishnakumar V."/>
            <person name="Chan A.P."/>
            <person name="Thibaud-Nissen F."/>
            <person name="Schobel S."/>
            <person name="Town C.D."/>
        </authorList>
    </citation>
    <scope>GENOME REANNOTATION</scope>
    <source>
        <strain>cv. Columbia</strain>
    </source>
</reference>
<reference key="4">
    <citation type="journal article" date="2002" name="J. Biol. Chem.">
        <title>Purple acid phosphatases of Arabidopsis thaliana. Comparative analysis and differential regulation by phosphate deprivation.</title>
        <authorList>
            <person name="Li D."/>
            <person name="Zhu H."/>
            <person name="Liu K."/>
            <person name="Liu X."/>
            <person name="Leggewie G."/>
            <person name="Udvardi M."/>
            <person name="Wang D."/>
        </authorList>
    </citation>
    <scope>GENE FAMILY</scope>
    <scope>NOMENCLATURE</scope>
</reference>
<dbReference type="EMBL" id="AY842027">
    <property type="protein sequence ID" value="AAW29951.1"/>
    <property type="molecule type" value="mRNA"/>
</dbReference>
<dbReference type="EMBL" id="AB012248">
    <property type="protein sequence ID" value="BAB09459.1"/>
    <property type="status" value="ALT_SEQ"/>
    <property type="molecule type" value="Genomic_DNA"/>
</dbReference>
<dbReference type="EMBL" id="CP002688">
    <property type="protein sequence ID" value="AED95939.1"/>
    <property type="molecule type" value="Genomic_DNA"/>
</dbReference>
<dbReference type="RefSeq" id="NP_199851.2">
    <property type="nucleotide sequence ID" value="NM_124422.4"/>
</dbReference>
<dbReference type="SMR" id="Q5MAU8"/>
<dbReference type="STRING" id="3702.Q5MAU8"/>
<dbReference type="GlyCosmos" id="Q5MAU8">
    <property type="glycosylation" value="3 sites, No reported glycans"/>
</dbReference>
<dbReference type="GlyGen" id="Q5MAU8">
    <property type="glycosylation" value="3 sites"/>
</dbReference>
<dbReference type="PaxDb" id="3702-AT5G50400.1"/>
<dbReference type="ProteomicsDB" id="249028"/>
<dbReference type="EnsemblPlants" id="AT5G50400.1">
    <property type="protein sequence ID" value="AT5G50400.1"/>
    <property type="gene ID" value="AT5G50400"/>
</dbReference>
<dbReference type="GeneID" id="835108"/>
<dbReference type="Gramene" id="AT5G50400.1">
    <property type="protein sequence ID" value="AT5G50400.1"/>
    <property type="gene ID" value="AT5G50400"/>
</dbReference>
<dbReference type="KEGG" id="ath:AT5G50400"/>
<dbReference type="Araport" id="AT5G50400"/>
<dbReference type="TAIR" id="AT5G50400">
    <property type="gene designation" value="PAP27"/>
</dbReference>
<dbReference type="eggNOG" id="KOG1378">
    <property type="taxonomic scope" value="Eukaryota"/>
</dbReference>
<dbReference type="HOGENOM" id="CLU_013387_4_1_1"/>
<dbReference type="InParanoid" id="Q5MAU8"/>
<dbReference type="OrthoDB" id="45007at2759"/>
<dbReference type="PhylomeDB" id="Q5MAU8"/>
<dbReference type="PRO" id="PR:Q5MAU8"/>
<dbReference type="Proteomes" id="UP000006548">
    <property type="component" value="Chromosome 5"/>
</dbReference>
<dbReference type="ExpressionAtlas" id="Q5MAU8">
    <property type="expression patterns" value="baseline and differential"/>
</dbReference>
<dbReference type="GO" id="GO:0005576">
    <property type="term" value="C:extracellular region"/>
    <property type="evidence" value="ECO:0007669"/>
    <property type="project" value="UniProtKB-SubCell"/>
</dbReference>
<dbReference type="GO" id="GO:0003993">
    <property type="term" value="F:acid phosphatase activity"/>
    <property type="evidence" value="ECO:0000250"/>
    <property type="project" value="TAIR"/>
</dbReference>
<dbReference type="GO" id="GO:0046872">
    <property type="term" value="F:metal ion binding"/>
    <property type="evidence" value="ECO:0007669"/>
    <property type="project" value="UniProtKB-KW"/>
</dbReference>
<dbReference type="CDD" id="cd00839">
    <property type="entry name" value="MPP_PAPs"/>
    <property type="match status" value="1"/>
</dbReference>
<dbReference type="FunFam" id="2.60.40.380:FF:000006">
    <property type="entry name" value="Purple acid phosphatase"/>
    <property type="match status" value="1"/>
</dbReference>
<dbReference type="FunFam" id="3.60.21.10:FF:000197">
    <property type="entry name" value="Purple acid phosphatase"/>
    <property type="match status" value="1"/>
</dbReference>
<dbReference type="Gene3D" id="3.60.21.10">
    <property type="match status" value="1"/>
</dbReference>
<dbReference type="Gene3D" id="2.60.40.380">
    <property type="entry name" value="Purple acid phosphatase-like, N-terminal"/>
    <property type="match status" value="1"/>
</dbReference>
<dbReference type="InterPro" id="IPR004843">
    <property type="entry name" value="Calcineurin-like_PHP_ApaH"/>
</dbReference>
<dbReference type="InterPro" id="IPR040974">
    <property type="entry name" value="Fn3_PAP"/>
</dbReference>
<dbReference type="InterPro" id="IPR029052">
    <property type="entry name" value="Metallo-depent_PP-like"/>
</dbReference>
<dbReference type="InterPro" id="IPR041792">
    <property type="entry name" value="MPP_PAP"/>
</dbReference>
<dbReference type="InterPro" id="IPR008963">
    <property type="entry name" value="Purple_acid_Pase-like_N"/>
</dbReference>
<dbReference type="InterPro" id="IPR015914">
    <property type="entry name" value="Purple_acid_Pase_N"/>
</dbReference>
<dbReference type="InterPro" id="IPR025733">
    <property type="entry name" value="Purple_acid_PPase_C_dom"/>
</dbReference>
<dbReference type="PANTHER" id="PTHR45778:SF6">
    <property type="entry name" value="INACTIVE PURPLE ACID PHOSPHATASE 24-RELATED"/>
    <property type="match status" value="1"/>
</dbReference>
<dbReference type="PANTHER" id="PTHR45778">
    <property type="entry name" value="PURPLE ACID PHOSPHATASE-RELATED"/>
    <property type="match status" value="1"/>
</dbReference>
<dbReference type="Pfam" id="PF17808">
    <property type="entry name" value="fn3_PAP"/>
    <property type="match status" value="1"/>
</dbReference>
<dbReference type="Pfam" id="PF00149">
    <property type="entry name" value="Metallophos"/>
    <property type="match status" value="1"/>
</dbReference>
<dbReference type="Pfam" id="PF14008">
    <property type="entry name" value="Metallophos_C"/>
    <property type="match status" value="1"/>
</dbReference>
<dbReference type="Pfam" id="PF16656">
    <property type="entry name" value="Pur_ac_phosph_N"/>
    <property type="match status" value="1"/>
</dbReference>
<dbReference type="SUPFAM" id="SSF56300">
    <property type="entry name" value="Metallo-dependent phosphatases"/>
    <property type="match status" value="1"/>
</dbReference>
<dbReference type="SUPFAM" id="SSF49363">
    <property type="entry name" value="Purple acid phosphatase, N-terminal domain"/>
    <property type="match status" value="1"/>
</dbReference>
<feature type="signal peptide" evidence="2">
    <location>
        <begin position="1"/>
        <end position="18"/>
    </location>
</feature>
<feature type="chain" id="PRO_0000372829" description="Probable inactive purple acid phosphatase 27">
    <location>
        <begin position="19"/>
        <end position="611"/>
    </location>
</feature>
<feature type="binding site" evidence="1">
    <location>
        <position position="293"/>
    </location>
    <ligand>
        <name>Fe cation</name>
        <dbReference type="ChEBI" id="CHEBI:24875"/>
    </ligand>
</feature>
<feature type="binding site" evidence="1">
    <location>
        <position position="334"/>
    </location>
    <ligand>
        <name>Fe cation</name>
        <dbReference type="ChEBI" id="CHEBI:24875"/>
    </ligand>
</feature>
<feature type="binding site" evidence="1">
    <location>
        <position position="334"/>
    </location>
    <ligand>
        <name>Zn(2+)</name>
        <dbReference type="ChEBI" id="CHEBI:29105"/>
    </ligand>
</feature>
<feature type="binding site" evidence="1">
    <location>
        <position position="337"/>
    </location>
    <ligand>
        <name>Fe cation</name>
        <dbReference type="ChEBI" id="CHEBI:24875"/>
    </ligand>
</feature>
<feature type="binding site" evidence="1">
    <location>
        <position position="367"/>
    </location>
    <ligand>
        <name>substrate</name>
    </ligand>
</feature>
<feature type="binding site" evidence="1">
    <location>
        <position position="367"/>
    </location>
    <ligand>
        <name>Zn(2+)</name>
        <dbReference type="ChEBI" id="CHEBI:29105"/>
    </ligand>
</feature>
<feature type="binding site" evidence="1">
    <location>
        <position position="456"/>
    </location>
    <ligand>
        <name>Zn(2+)</name>
        <dbReference type="ChEBI" id="CHEBI:29105"/>
    </ligand>
</feature>
<feature type="binding site" evidence="1">
    <location>
        <begin position="498"/>
        <end position="500"/>
    </location>
    <ligand>
        <name>substrate</name>
    </ligand>
</feature>
<feature type="binding site" evidence="1">
    <location>
        <position position="498"/>
    </location>
    <ligand>
        <name>Zn(2+)</name>
        <dbReference type="ChEBI" id="CHEBI:29105"/>
    </ligand>
</feature>
<feature type="binding site" evidence="1">
    <location>
        <position position="500"/>
    </location>
    <ligand>
        <name>Fe cation</name>
        <dbReference type="ChEBI" id="CHEBI:24875"/>
    </ligand>
</feature>
<feature type="glycosylation site" description="N-linked (GlcNAc...) asparagine" evidence="2">
    <location>
        <position position="263"/>
    </location>
</feature>
<feature type="glycosylation site" description="N-linked (GlcNAc...) asparagine" evidence="2">
    <location>
        <position position="271"/>
    </location>
</feature>
<feature type="glycosylation site" description="N-linked (GlcNAc...) asparagine" evidence="2">
    <location>
        <position position="314"/>
    </location>
</feature>
<keyword id="KW-0325">Glycoprotein</keyword>
<keyword id="KW-0408">Iron</keyword>
<keyword id="KW-0479">Metal-binding</keyword>
<keyword id="KW-1185">Reference proteome</keyword>
<keyword id="KW-0964">Secreted</keyword>
<keyword id="KW-0732">Signal</keyword>
<keyword id="KW-0862">Zinc</keyword>
<accession>Q5MAU8</accession>
<accession>Q9FK32</accession>
<name>PPA27_ARATH</name>
<sequence>MARNFLLVLLWFIVQVSSSHENGRGDQALSQIDIYAINLAQHHSAFIHVSPLVLGSQGQDTEWVNVVISNPEPSSDDWVGVFSPAKFDSSSCAPTDDKEIAPFICSAPVKYMYAKSSPDYMKTGNAVLKFMLINQRADFSFALFTGGLSNPTLVSVSNHVSFINPKAPVYPRLALGKKWDEMTVTWTSGYNIGEAVPFVEWSRKGTRSRRSPAGTLTFTRNSMCGAPARTVGWRDPGFIHTASLKDLWPNLKYTYRMGHELMNGSIVWSKNFTFKSSPYPGQDSLQRVIIFGDMGKGERDGSNEYNDYQPGSLNTTDQLIKDLKNIDIVFHIGDITYANGYISQWDQFTAQVEPIASTVPYMVASGNHERDWPDSGSFYGGKDSGGECGVPAETMFDFPAENKAKFWYSADYGMFRFCVADTEHDWREGSEQYQFIERCLASVDRRAQPWLIFIAHRVLGYSTNDWYGQEGSFEEPMGRESLQKLWQKYKVDIAFYGHVHNYERTCPIYQNQCMDNEKSHYSGAFKGTIHVVVGGAGSHLSSFSSLKPKWSIFRDYDYGFVKLTAFDHSSLLFEYKKSSNGAVHDSFTIFREYRDVLACVRDSCEPTTLAS</sequence>